<evidence type="ECO:0000250" key="1">
    <source>
        <dbReference type="UniProtKB" id="Q86TU7"/>
    </source>
</evidence>
<evidence type="ECO:0000250" key="2">
    <source>
        <dbReference type="UniProtKB" id="Q91WC0"/>
    </source>
</evidence>
<evidence type="ECO:0000255" key="3">
    <source>
        <dbReference type="PROSITE-ProRule" id="PRU00190"/>
    </source>
</evidence>
<evidence type="ECO:0000255" key="4">
    <source>
        <dbReference type="PROSITE-ProRule" id="PRU00898"/>
    </source>
</evidence>
<evidence type="ECO:0000256" key="5">
    <source>
        <dbReference type="SAM" id="MobiDB-lite"/>
    </source>
</evidence>
<evidence type="ECO:0000305" key="6"/>
<dbReference type="EC" id="2.1.1.85" evidence="1"/>
<dbReference type="EMBL" id="DP001087">
    <property type="protein sequence ID" value="ACO71275.1"/>
    <property type="molecule type" value="Genomic_DNA"/>
</dbReference>
<dbReference type="RefSeq" id="XP_012381342.1">
    <property type="nucleotide sequence ID" value="XM_012525888.1"/>
</dbReference>
<dbReference type="RefSeq" id="XP_071069801.1">
    <property type="nucleotide sequence ID" value="XM_071213700.1"/>
</dbReference>
<dbReference type="SMR" id="C1FXW2"/>
<dbReference type="GeneID" id="101422009"/>
<dbReference type="KEGG" id="dnm:101422009"/>
<dbReference type="HOGENOM" id="CLU_028272_0_0_1"/>
<dbReference type="OrthoDB" id="441812at2759"/>
<dbReference type="GO" id="GO:0005737">
    <property type="term" value="C:cytoplasm"/>
    <property type="evidence" value="ECO:0000250"/>
    <property type="project" value="UniProtKB"/>
</dbReference>
<dbReference type="GO" id="GO:0005634">
    <property type="term" value="C:nucleus"/>
    <property type="evidence" value="ECO:0007669"/>
    <property type="project" value="UniProtKB-SubCell"/>
</dbReference>
<dbReference type="GO" id="GO:0003779">
    <property type="term" value="F:actin binding"/>
    <property type="evidence" value="ECO:0007669"/>
    <property type="project" value="UniProtKB-KW"/>
</dbReference>
<dbReference type="GO" id="GO:0046975">
    <property type="term" value="F:histone H3K36 methyltransferase activity"/>
    <property type="evidence" value="ECO:0000250"/>
    <property type="project" value="UniProtKB"/>
</dbReference>
<dbReference type="GO" id="GO:0018064">
    <property type="term" value="F:protein-L-histidine N-tele-methyltransferase activity"/>
    <property type="evidence" value="ECO:0000250"/>
    <property type="project" value="UniProtKB"/>
</dbReference>
<dbReference type="GO" id="GO:0003713">
    <property type="term" value="F:transcription coactivator activity"/>
    <property type="evidence" value="ECO:0000250"/>
    <property type="project" value="UniProtKB"/>
</dbReference>
<dbReference type="GO" id="GO:0030047">
    <property type="term" value="P:actin modification"/>
    <property type="evidence" value="ECO:0000250"/>
    <property type="project" value="UniProtKB"/>
</dbReference>
<dbReference type="GO" id="GO:0018021">
    <property type="term" value="P:peptidyl-histidine methylation"/>
    <property type="evidence" value="ECO:0000250"/>
    <property type="project" value="UniProtKB"/>
</dbReference>
<dbReference type="GO" id="GO:0045893">
    <property type="term" value="P:positive regulation of DNA-templated transcription"/>
    <property type="evidence" value="ECO:0000250"/>
    <property type="project" value="UniProtKB"/>
</dbReference>
<dbReference type="GO" id="GO:0070472">
    <property type="term" value="P:regulation of uterine smooth muscle contraction"/>
    <property type="evidence" value="ECO:0000250"/>
    <property type="project" value="UniProtKB"/>
</dbReference>
<dbReference type="CDD" id="cd19176">
    <property type="entry name" value="SET_SETD3"/>
    <property type="match status" value="1"/>
</dbReference>
<dbReference type="FunFam" id="3.90.1410.10:FF:000001">
    <property type="entry name" value="histone-lysine N-methyltransferase setd3 isoform X1"/>
    <property type="match status" value="1"/>
</dbReference>
<dbReference type="FunFam" id="3.90.1420.10:FF:000001">
    <property type="entry name" value="histone-lysine N-methyltransferase setd3 isoform X1"/>
    <property type="match status" value="1"/>
</dbReference>
<dbReference type="Gene3D" id="3.90.1420.10">
    <property type="entry name" value="Rubisco LSMT, substrate-binding domain"/>
    <property type="match status" value="1"/>
</dbReference>
<dbReference type="Gene3D" id="3.90.1410.10">
    <property type="entry name" value="set domain protein methyltransferase, domain 1"/>
    <property type="match status" value="1"/>
</dbReference>
<dbReference type="InterPro" id="IPR015353">
    <property type="entry name" value="Rubisco_LSMT_subst-bd"/>
</dbReference>
<dbReference type="InterPro" id="IPR036464">
    <property type="entry name" value="Rubisco_LSMT_subst-bd_sf"/>
</dbReference>
<dbReference type="InterPro" id="IPR001214">
    <property type="entry name" value="SET_dom"/>
</dbReference>
<dbReference type="InterPro" id="IPR046341">
    <property type="entry name" value="SET_dom_sf"/>
</dbReference>
<dbReference type="InterPro" id="IPR025785">
    <property type="entry name" value="SETD3"/>
</dbReference>
<dbReference type="InterPro" id="IPR044428">
    <property type="entry name" value="SETD3_SET"/>
</dbReference>
<dbReference type="InterPro" id="IPR050600">
    <property type="entry name" value="SETD3_SETD6_MTase"/>
</dbReference>
<dbReference type="PANTHER" id="PTHR13271:SF47">
    <property type="entry name" value="ACTIN-HISTIDINE N-METHYLTRANSFERASE"/>
    <property type="match status" value="1"/>
</dbReference>
<dbReference type="PANTHER" id="PTHR13271">
    <property type="entry name" value="UNCHARACTERIZED PUTATIVE METHYLTRANSFERASE"/>
    <property type="match status" value="1"/>
</dbReference>
<dbReference type="Pfam" id="PF09273">
    <property type="entry name" value="Rubis-subs-bind"/>
    <property type="match status" value="1"/>
</dbReference>
<dbReference type="Pfam" id="PF00856">
    <property type="entry name" value="SET"/>
    <property type="match status" value="1"/>
</dbReference>
<dbReference type="SUPFAM" id="SSF81822">
    <property type="entry name" value="RuBisCo LSMT C-terminal, substrate-binding domain"/>
    <property type="match status" value="1"/>
</dbReference>
<dbReference type="SUPFAM" id="SSF82199">
    <property type="entry name" value="SET domain"/>
    <property type="match status" value="1"/>
</dbReference>
<dbReference type="PROSITE" id="PS51565">
    <property type="entry name" value="SAM_MT85_SETD3"/>
    <property type="match status" value="1"/>
</dbReference>
<dbReference type="PROSITE" id="PS50280">
    <property type="entry name" value="SET"/>
    <property type="match status" value="1"/>
</dbReference>
<accession>C1FXW2</accession>
<protein>
    <recommendedName>
        <fullName evidence="1">Actin-histidine N-methyltransferase</fullName>
        <ecNumber evidence="1">2.1.1.85</ecNumber>
    </recommendedName>
    <alternativeName>
        <fullName evidence="6">Protein-L-histidine N-tele-methyltransferase</fullName>
    </alternativeName>
    <alternativeName>
        <fullName evidence="6">SET domain-containing protein 3</fullName>
    </alternativeName>
</protein>
<gene>
    <name evidence="1" type="primary">SETD3</name>
</gene>
<comment type="function">
    <text evidence="1">Protein-histidine N-methyltransferase that specifically mediates 3-methylhistidine (tele-methylhistidine) methylation of actin at 'His-73'. Histidine methylation of actin is required for smooth muscle contraction of the laboring uterus during delivery. Does not have protein-lysine N-methyltransferase activity and probably only catalyzes histidine methylation of actin.</text>
</comment>
<comment type="catalytic activity">
    <reaction evidence="1">
        <text>L-histidyl-[protein] + S-adenosyl-L-methionine = N(tele)-methyl-L-histidyl-[protein] + S-adenosyl-L-homocysteine + H(+)</text>
        <dbReference type="Rhea" id="RHEA:19369"/>
        <dbReference type="Rhea" id="RHEA-COMP:9745"/>
        <dbReference type="Rhea" id="RHEA-COMP:11600"/>
        <dbReference type="ChEBI" id="CHEBI:15378"/>
        <dbReference type="ChEBI" id="CHEBI:16367"/>
        <dbReference type="ChEBI" id="CHEBI:29979"/>
        <dbReference type="ChEBI" id="CHEBI:57856"/>
        <dbReference type="ChEBI" id="CHEBI:59789"/>
        <dbReference type="EC" id="2.1.1.85"/>
    </reaction>
</comment>
<comment type="subunit">
    <text evidence="2">Interacts with MYOD1.</text>
</comment>
<comment type="subcellular location">
    <subcellularLocation>
        <location evidence="1">Cytoplasm</location>
    </subcellularLocation>
    <subcellularLocation>
        <location evidence="1">Nucleus</location>
    </subcellularLocation>
    <text evidence="1">Localizes mainly in the cytoplasm.</text>
</comment>
<comment type="domain">
    <text evidence="1">The SET domain specifically recognizes and binds actin, suggesting that it does not accommodate substrates diverging from actin.</text>
</comment>
<comment type="PTM">
    <text evidence="1">Phosphorylated by GSK3B, which is required for recognition by the SCF(FBXW7) complex and subsequent degradation.</text>
</comment>
<comment type="PTM">
    <text evidence="1">Ubiquitinated by the SCF(FBXW7) complex following phosphorylation by GSK3B, leading to its degradation by the proteasome.</text>
</comment>
<comment type="similarity">
    <text evidence="4">Belongs to the class V-like SAM-binding methyltransferase superfamily. SETD3 actin-histidine methyltransferase family.</text>
</comment>
<reference key="1">
    <citation type="submission" date="2009-04" db="EMBL/GenBank/DDBJ databases">
        <title>NISC comparative sequencing initiative.</title>
        <authorList>
            <person name="Antonellis A."/>
            <person name="Ayele K."/>
            <person name="Benjamin B."/>
            <person name="Blakesley R.W."/>
            <person name="Boakye A."/>
            <person name="Bouffard G.G."/>
            <person name="Brinkley C."/>
            <person name="Brooks S."/>
            <person name="Chu G."/>
            <person name="Coleman H."/>
            <person name="Engle J."/>
            <person name="Gestole M."/>
            <person name="Greene A."/>
            <person name="Guan X."/>
            <person name="Gupta J."/>
            <person name="Haghighi P."/>
            <person name="Han J."/>
            <person name="Hansen N."/>
            <person name="Ho S.-L."/>
            <person name="Hu P."/>
            <person name="Hunter G."/>
            <person name="Hurle B."/>
            <person name="Idol J.R."/>
            <person name="Kwong P."/>
            <person name="Laric P."/>
            <person name="Larson S."/>
            <person name="Lee-Lin S.-Q."/>
            <person name="Legaspi R."/>
            <person name="Madden M."/>
            <person name="Maduro Q.L."/>
            <person name="Maduro V.B."/>
            <person name="Margulies E.H."/>
            <person name="Masiello C."/>
            <person name="Maskeri B."/>
            <person name="McDowell J."/>
            <person name="Mojidi H.A."/>
            <person name="Mullikin J.C."/>
            <person name="Oestreicher J.S."/>
            <person name="Park M."/>
            <person name="Portnoy M.E."/>
            <person name="Prasad A."/>
            <person name="Puri O."/>
            <person name="Reddix-Dugue N."/>
            <person name="Schandler K."/>
            <person name="Schueler M.G."/>
            <person name="Sison C."/>
            <person name="Stantripop S."/>
            <person name="Stephen E."/>
            <person name="Taye A."/>
            <person name="Thomas J.W."/>
            <person name="Thomas P.J."/>
            <person name="Tsipouri V."/>
            <person name="Ung L."/>
            <person name="Vogt J.L."/>
            <person name="Wetherby K.D."/>
            <person name="Young A."/>
            <person name="Green E.D."/>
        </authorList>
    </citation>
    <scope>NUCLEOTIDE SEQUENCE [LARGE SCALE GENOMIC DNA]</scope>
</reference>
<keyword id="KW-0009">Actin-binding</keyword>
<keyword id="KW-0963">Cytoplasm</keyword>
<keyword id="KW-0489">Methyltransferase</keyword>
<keyword id="KW-0539">Nucleus</keyword>
<keyword id="KW-0597">Phosphoprotein</keyword>
<keyword id="KW-0949">S-adenosyl-L-methionine</keyword>
<keyword id="KW-0808">Transferase</keyword>
<keyword id="KW-0832">Ubl conjugation</keyword>
<proteinExistence type="inferred from homology"/>
<organism>
    <name type="scientific">Dasypus novemcinctus</name>
    <name type="common">Nine-banded armadillo</name>
    <dbReference type="NCBI Taxonomy" id="9361"/>
    <lineage>
        <taxon>Eukaryota</taxon>
        <taxon>Metazoa</taxon>
        <taxon>Chordata</taxon>
        <taxon>Craniata</taxon>
        <taxon>Vertebrata</taxon>
        <taxon>Euteleostomi</taxon>
        <taxon>Mammalia</taxon>
        <taxon>Eutheria</taxon>
        <taxon>Xenarthra</taxon>
        <taxon>Cingulata</taxon>
        <taxon>Dasypodidae</taxon>
        <taxon>Dasypus</taxon>
    </lineage>
</organism>
<sequence>MGKKSRVKTQKSGTGATATVSPKEILSLTSELLQKCSSPAPGPGKEWEEYVQIRSLVEKIRKKQKGLSVIFDGKREDYFPDLMKWASENGASVEGFEMVNFKEEGFGLRATRDIKAEELFLWVPRKLLMTVESAKNSMLGPLYSQDRILQAMGNITLAFHLLCERANPNSFWQPYIQSLPGEYDTPLYFEEDEVRYLHSTQAIHDVFSQYKNTARQYAYFYKVIQTHPHANKLPLKDSFTYEDYRWAVSSVMTRQNQIPTEDGSRVTLALIPLWDMCNHTNGLITTGYNLEDDRCECVALQDFRAGEQIYIFYGTRSNAEFVIHSGFFFDNNSHDRVKIKLGVSKSDRLYAMKAEVLARAGIPTSSVFALHFTEPPISAQLLAFLRVFCMTEEELKEHLLGENAIDRIFTLGNSEFPVSWDNEVKLWTFLEDRASLLLKTYKTTIEEDKSFLKNHDLSVRATMAIKLRLGEKEILEKAVKSAAVNREYFRKQMEDKAPLPRYEESNLGLLESSVADSSLPLVLRNLEEEVGVQEALAIQAEANENGLVNGERSFPNGTRSEEDLKQEERKRAKGDAKESSSDSTDAVKE</sequence>
<feature type="chain" id="PRO_0000408339" description="Actin-histidine N-methyltransferase">
    <location>
        <begin position="1"/>
        <end position="589"/>
    </location>
</feature>
<feature type="domain" description="SET" evidence="3">
    <location>
        <begin position="94"/>
        <end position="314"/>
    </location>
</feature>
<feature type="region of interest" description="Disordered" evidence="5">
    <location>
        <begin position="1"/>
        <end position="22"/>
    </location>
</feature>
<feature type="region of interest" description="Disordered" evidence="5">
    <location>
        <begin position="547"/>
        <end position="589"/>
    </location>
</feature>
<feature type="compositionally biased region" description="Polar residues" evidence="5">
    <location>
        <begin position="10"/>
        <end position="20"/>
    </location>
</feature>
<feature type="compositionally biased region" description="Basic and acidic residues" evidence="5">
    <location>
        <begin position="559"/>
        <end position="589"/>
    </location>
</feature>
<feature type="binding site" evidence="1">
    <location>
        <position position="75"/>
    </location>
    <ligand>
        <name>S-adenosyl-L-methionine</name>
        <dbReference type="ChEBI" id="CHEBI:59789"/>
    </ligand>
</feature>
<feature type="binding site" evidence="1">
    <location>
        <begin position="104"/>
        <end position="106"/>
    </location>
    <ligand>
        <name>S-adenosyl-L-methionine</name>
        <dbReference type="ChEBI" id="CHEBI:59789"/>
    </ligand>
</feature>
<feature type="binding site" evidence="1">
    <location>
        <position position="254"/>
    </location>
    <ligand>
        <name>S-adenosyl-L-methionine</name>
        <dbReference type="ChEBI" id="CHEBI:59789"/>
    </ligand>
</feature>
<feature type="binding site" evidence="1">
    <location>
        <begin position="275"/>
        <end position="279"/>
    </location>
    <ligand>
        <name>S-adenosyl-L-methionine</name>
        <dbReference type="ChEBI" id="CHEBI:59789"/>
    </ligand>
</feature>
<feature type="binding site" evidence="1">
    <location>
        <begin position="325"/>
        <end position="327"/>
    </location>
    <ligand>
        <name>S-adenosyl-L-methionine</name>
        <dbReference type="ChEBI" id="CHEBI:59789"/>
    </ligand>
</feature>
<feature type="modified residue" description="Phosphoserine" evidence="1">
    <location>
        <position position="513"/>
    </location>
</feature>
<name>SETD3_DASNO</name>